<name>ATP61_SYNC1</name>
<gene>
    <name evidence="1" type="primary">atpB1</name>
    <name type="ordered locus">Pcar_0015</name>
</gene>
<feature type="chain" id="PRO_0000362366" description="ATP synthase subunit a 1">
    <location>
        <begin position="1"/>
        <end position="234"/>
    </location>
</feature>
<feature type="transmembrane region" description="Helical" evidence="1">
    <location>
        <begin position="29"/>
        <end position="49"/>
    </location>
</feature>
<feature type="transmembrane region" description="Helical" evidence="1">
    <location>
        <begin position="90"/>
        <end position="110"/>
    </location>
</feature>
<feature type="transmembrane region" description="Helical" evidence="1">
    <location>
        <begin position="116"/>
        <end position="136"/>
    </location>
</feature>
<feature type="transmembrane region" description="Helical" evidence="1">
    <location>
        <begin position="147"/>
        <end position="167"/>
    </location>
</feature>
<feature type="transmembrane region" description="Helical" evidence="1">
    <location>
        <begin position="186"/>
        <end position="206"/>
    </location>
</feature>
<feature type="transmembrane region" description="Helical" evidence="1">
    <location>
        <begin position="207"/>
        <end position="227"/>
    </location>
</feature>
<dbReference type="EMBL" id="CP000142">
    <property type="protein sequence ID" value="ABA87278.1"/>
    <property type="molecule type" value="Genomic_DNA"/>
</dbReference>
<dbReference type="RefSeq" id="WP_011339662.1">
    <property type="nucleotide sequence ID" value="NC_007498.2"/>
</dbReference>
<dbReference type="SMR" id="Q3A8L4"/>
<dbReference type="STRING" id="338963.Pcar_0015"/>
<dbReference type="KEGG" id="pca:Pcar_0015"/>
<dbReference type="eggNOG" id="COG0356">
    <property type="taxonomic scope" value="Bacteria"/>
</dbReference>
<dbReference type="HOGENOM" id="CLU_041018_2_2_7"/>
<dbReference type="OrthoDB" id="9789241at2"/>
<dbReference type="Proteomes" id="UP000002534">
    <property type="component" value="Chromosome"/>
</dbReference>
<dbReference type="GO" id="GO:0005886">
    <property type="term" value="C:plasma membrane"/>
    <property type="evidence" value="ECO:0007669"/>
    <property type="project" value="UniProtKB-SubCell"/>
</dbReference>
<dbReference type="GO" id="GO:0045259">
    <property type="term" value="C:proton-transporting ATP synthase complex"/>
    <property type="evidence" value="ECO:0007669"/>
    <property type="project" value="UniProtKB-KW"/>
</dbReference>
<dbReference type="GO" id="GO:0046933">
    <property type="term" value="F:proton-transporting ATP synthase activity, rotational mechanism"/>
    <property type="evidence" value="ECO:0007669"/>
    <property type="project" value="UniProtKB-UniRule"/>
</dbReference>
<dbReference type="GO" id="GO:0042777">
    <property type="term" value="P:proton motive force-driven plasma membrane ATP synthesis"/>
    <property type="evidence" value="ECO:0007669"/>
    <property type="project" value="TreeGrafter"/>
</dbReference>
<dbReference type="CDD" id="cd00310">
    <property type="entry name" value="ATP-synt_Fo_a_6"/>
    <property type="match status" value="1"/>
</dbReference>
<dbReference type="FunFam" id="1.20.120.220:FF:000006">
    <property type="entry name" value="ATP synthase subunit a"/>
    <property type="match status" value="1"/>
</dbReference>
<dbReference type="Gene3D" id="1.20.120.220">
    <property type="entry name" value="ATP synthase, F0 complex, subunit A"/>
    <property type="match status" value="1"/>
</dbReference>
<dbReference type="HAMAP" id="MF_01393">
    <property type="entry name" value="ATP_synth_a_bact"/>
    <property type="match status" value="1"/>
</dbReference>
<dbReference type="InterPro" id="IPR045082">
    <property type="entry name" value="ATP_syn_F0_a_bact/chloroplast"/>
</dbReference>
<dbReference type="InterPro" id="IPR000568">
    <property type="entry name" value="ATP_synth_F0_asu"/>
</dbReference>
<dbReference type="InterPro" id="IPR023011">
    <property type="entry name" value="ATP_synth_F0_asu_AS"/>
</dbReference>
<dbReference type="InterPro" id="IPR035908">
    <property type="entry name" value="F0_ATP_A_sf"/>
</dbReference>
<dbReference type="NCBIfam" id="TIGR01131">
    <property type="entry name" value="ATP_synt_6_or_A"/>
    <property type="match status" value="1"/>
</dbReference>
<dbReference type="PANTHER" id="PTHR42823">
    <property type="entry name" value="ATP SYNTHASE SUBUNIT A, CHLOROPLASTIC"/>
    <property type="match status" value="1"/>
</dbReference>
<dbReference type="PANTHER" id="PTHR42823:SF3">
    <property type="entry name" value="ATP SYNTHASE SUBUNIT A, CHLOROPLASTIC"/>
    <property type="match status" value="1"/>
</dbReference>
<dbReference type="Pfam" id="PF00119">
    <property type="entry name" value="ATP-synt_A"/>
    <property type="match status" value="1"/>
</dbReference>
<dbReference type="PRINTS" id="PR00123">
    <property type="entry name" value="ATPASEA"/>
</dbReference>
<dbReference type="SUPFAM" id="SSF81336">
    <property type="entry name" value="F1F0 ATP synthase subunit A"/>
    <property type="match status" value="1"/>
</dbReference>
<dbReference type="PROSITE" id="PS00449">
    <property type="entry name" value="ATPASE_A"/>
    <property type="match status" value="1"/>
</dbReference>
<comment type="function">
    <text evidence="1">Key component of the proton channel; it plays a direct role in the translocation of protons across the membrane.</text>
</comment>
<comment type="subunit">
    <text evidence="1">F-type ATPases have 2 components, CF(1) - the catalytic core - and CF(0) - the membrane proton channel. CF(1) has five subunits: alpha(3), beta(3), gamma(1), delta(1), epsilon(1). CF(0) has three main subunits: a(1), b(2) and c(9-12). The alpha and beta chains form an alternating ring which encloses part of the gamma chain. CF(1) is attached to CF(0) by a central stalk formed by the gamma and epsilon chains, while a peripheral stalk is formed by the delta and b chains.</text>
</comment>
<comment type="subcellular location">
    <subcellularLocation>
        <location evidence="1">Cell inner membrane</location>
        <topology evidence="1">Multi-pass membrane protein</topology>
    </subcellularLocation>
</comment>
<comment type="similarity">
    <text evidence="1">Belongs to the ATPase A chain family.</text>
</comment>
<reference key="1">
    <citation type="submission" date="2005-10" db="EMBL/GenBank/DDBJ databases">
        <title>Complete sequence of Pelobacter carbinolicus DSM 2380.</title>
        <authorList>
            <person name="Copeland A."/>
            <person name="Lucas S."/>
            <person name="Lapidus A."/>
            <person name="Barry K."/>
            <person name="Detter J.C."/>
            <person name="Glavina T."/>
            <person name="Hammon N."/>
            <person name="Israni S."/>
            <person name="Pitluck S."/>
            <person name="Chertkov O."/>
            <person name="Schmutz J."/>
            <person name="Larimer F."/>
            <person name="Land M."/>
            <person name="Kyrpides N."/>
            <person name="Ivanova N."/>
            <person name="Richardson P."/>
        </authorList>
    </citation>
    <scope>NUCLEOTIDE SEQUENCE [LARGE SCALE GENOMIC DNA]</scope>
    <source>
        <strain>DSM 2380 / NBRC 103641 / GraBd1</strain>
    </source>
</reference>
<organism>
    <name type="scientific">Syntrophotalea carbinolica (strain DSM 2380 / NBRC 103641 / GraBd1)</name>
    <name type="common">Pelobacter carbinolicus</name>
    <dbReference type="NCBI Taxonomy" id="338963"/>
    <lineage>
        <taxon>Bacteria</taxon>
        <taxon>Pseudomonadati</taxon>
        <taxon>Thermodesulfobacteriota</taxon>
        <taxon>Desulfuromonadia</taxon>
        <taxon>Desulfuromonadales</taxon>
        <taxon>Syntrophotaleaceae</taxon>
        <taxon>Syntrophotalea</taxon>
    </lineage>
</organism>
<sequence>MTHPFLFLKWLVEHFTQGTSLENLEHYGFLVHVTHAWLIMLLLTGVALLLKRRLSEVPGGLQNLVEIVLVELGRLADETMGPKGRRYFPLIATLALFILFSNLIALIPGFAPPTANLNTNAALALAVFGMTHVVGVREHGLKYFKHFVGPVWWLAPLILPIEIIGHLARPLSLALRLFGNMYGHEIVLVIFFTLVPLLLPIPMMLMGILVAFIQTFVFTLLAMIYIAGALEEAH</sequence>
<evidence type="ECO:0000255" key="1">
    <source>
        <dbReference type="HAMAP-Rule" id="MF_01393"/>
    </source>
</evidence>
<keyword id="KW-0066">ATP synthesis</keyword>
<keyword id="KW-0997">Cell inner membrane</keyword>
<keyword id="KW-1003">Cell membrane</keyword>
<keyword id="KW-0138">CF(0)</keyword>
<keyword id="KW-0375">Hydrogen ion transport</keyword>
<keyword id="KW-0406">Ion transport</keyword>
<keyword id="KW-0472">Membrane</keyword>
<keyword id="KW-1185">Reference proteome</keyword>
<keyword id="KW-0812">Transmembrane</keyword>
<keyword id="KW-1133">Transmembrane helix</keyword>
<keyword id="KW-0813">Transport</keyword>
<accession>Q3A8L4</accession>
<protein>
    <recommendedName>
        <fullName evidence="1">ATP synthase subunit a 1</fullName>
    </recommendedName>
    <alternativeName>
        <fullName evidence="1">ATP synthase F0 sector subunit a 1</fullName>
    </alternativeName>
    <alternativeName>
        <fullName evidence="1">F-ATPase subunit 6 1</fullName>
    </alternativeName>
</protein>
<proteinExistence type="inferred from homology"/>